<accession>B3LXF2</accession>
<dbReference type="EC" id="2.7.1.107"/>
<dbReference type="EMBL" id="CH902617">
    <property type="protein sequence ID" value="EDV42796.1"/>
    <property type="status" value="ALT_SEQ"/>
    <property type="molecule type" value="Genomic_DNA"/>
</dbReference>
<dbReference type="SMR" id="B3LXF2"/>
<dbReference type="FunCoup" id="B3LXF2">
    <property type="interactions" value="337"/>
</dbReference>
<dbReference type="STRING" id="7217.B3LXF2"/>
<dbReference type="GeneID" id="6500954"/>
<dbReference type="KEGG" id="dan:6500954"/>
<dbReference type="eggNOG" id="KOG1170">
    <property type="taxonomic scope" value="Eukaryota"/>
</dbReference>
<dbReference type="InParanoid" id="B3LXF2"/>
<dbReference type="OrthoDB" id="196165at2759"/>
<dbReference type="Proteomes" id="UP000007801">
    <property type="component" value="Unassembled WGS sequence"/>
</dbReference>
<dbReference type="GO" id="GO:0005737">
    <property type="term" value="C:cytoplasm"/>
    <property type="evidence" value="ECO:0007669"/>
    <property type="project" value="UniProtKB-SubCell"/>
</dbReference>
<dbReference type="GO" id="GO:0005886">
    <property type="term" value="C:plasma membrane"/>
    <property type="evidence" value="ECO:0007669"/>
    <property type="project" value="TreeGrafter"/>
</dbReference>
<dbReference type="GO" id="GO:0005524">
    <property type="term" value="F:ATP binding"/>
    <property type="evidence" value="ECO:0007669"/>
    <property type="project" value="UniProtKB-KW"/>
</dbReference>
<dbReference type="GO" id="GO:0004143">
    <property type="term" value="F:ATP-dependent diacylglycerol kinase activity"/>
    <property type="evidence" value="ECO:0007669"/>
    <property type="project" value="UniProtKB-EC"/>
</dbReference>
<dbReference type="GO" id="GO:0008270">
    <property type="term" value="F:zinc ion binding"/>
    <property type="evidence" value="ECO:0007669"/>
    <property type="project" value="UniProtKB-KW"/>
</dbReference>
<dbReference type="GO" id="GO:0046486">
    <property type="term" value="P:glycerolipid metabolic process"/>
    <property type="evidence" value="ECO:0007669"/>
    <property type="project" value="UniProtKB-ARBA"/>
</dbReference>
<dbReference type="GO" id="GO:0007200">
    <property type="term" value="P:phospholipase C-activating G protein-coupled receptor signaling pathway"/>
    <property type="evidence" value="ECO:0007669"/>
    <property type="project" value="InterPro"/>
</dbReference>
<dbReference type="CDD" id="cd20800">
    <property type="entry name" value="C1_DGK_typeII_rpt1"/>
    <property type="match status" value="1"/>
</dbReference>
<dbReference type="CDD" id="cd20852">
    <property type="entry name" value="C1_DGK_typeII_rpt2"/>
    <property type="match status" value="1"/>
</dbReference>
<dbReference type="CDD" id="cd13274">
    <property type="entry name" value="PH_DGK_type2"/>
    <property type="match status" value="1"/>
</dbReference>
<dbReference type="CDD" id="cd09507">
    <property type="entry name" value="SAM_DGK-delta-eta"/>
    <property type="match status" value="1"/>
</dbReference>
<dbReference type="FunFam" id="1.10.150.50:FF:000021">
    <property type="entry name" value="Diacylglycerol kinase"/>
    <property type="match status" value="1"/>
</dbReference>
<dbReference type="FunFam" id="2.30.29.30:FF:000313">
    <property type="entry name" value="Diacylglycerol kinase"/>
    <property type="match status" value="1"/>
</dbReference>
<dbReference type="FunFam" id="2.60.200.40:FF:000001">
    <property type="entry name" value="Diacylglycerol kinase"/>
    <property type="match status" value="1"/>
</dbReference>
<dbReference type="FunFam" id="3.30.60.20:FF:000002">
    <property type="entry name" value="Diacylglycerol kinase"/>
    <property type="match status" value="1"/>
</dbReference>
<dbReference type="FunFam" id="3.30.60.20:FF:000029">
    <property type="entry name" value="Diacylglycerol kinase"/>
    <property type="match status" value="1"/>
</dbReference>
<dbReference type="FunFam" id="3.40.50.10330:FF:000001">
    <property type="entry name" value="Diacylglycerol kinase"/>
    <property type="match status" value="1"/>
</dbReference>
<dbReference type="Gene3D" id="2.60.200.40">
    <property type="match status" value="1"/>
</dbReference>
<dbReference type="Gene3D" id="3.30.60.20">
    <property type="match status" value="2"/>
</dbReference>
<dbReference type="Gene3D" id="2.30.29.30">
    <property type="entry name" value="Pleckstrin-homology domain (PH domain)/Phosphotyrosine-binding domain (PTB)"/>
    <property type="match status" value="1"/>
</dbReference>
<dbReference type="Gene3D" id="3.40.50.10330">
    <property type="entry name" value="Probable inorganic polyphosphate/atp-NAD kinase, domain 1"/>
    <property type="match status" value="1"/>
</dbReference>
<dbReference type="Gene3D" id="1.10.150.50">
    <property type="entry name" value="Transcription Factor, Ets-1"/>
    <property type="match status" value="1"/>
</dbReference>
<dbReference type="InterPro" id="IPR017438">
    <property type="entry name" value="ATP-NAD_kinase_N"/>
</dbReference>
<dbReference type="InterPro" id="IPR046349">
    <property type="entry name" value="C1-like_sf"/>
</dbReference>
<dbReference type="InterPro" id="IPR037607">
    <property type="entry name" value="DGK"/>
</dbReference>
<dbReference type="InterPro" id="IPR054474">
    <property type="entry name" value="DGKD_4H"/>
</dbReference>
<dbReference type="InterPro" id="IPR000756">
    <property type="entry name" value="Diacylglycerol_kin_accessory"/>
</dbReference>
<dbReference type="InterPro" id="IPR001206">
    <property type="entry name" value="Diacylglycerol_kinase_cat_dom"/>
</dbReference>
<dbReference type="InterPro" id="IPR016064">
    <property type="entry name" value="NAD/diacylglycerol_kinase_sf"/>
</dbReference>
<dbReference type="InterPro" id="IPR002219">
    <property type="entry name" value="PE/DAG-bd"/>
</dbReference>
<dbReference type="InterPro" id="IPR011993">
    <property type="entry name" value="PH-like_dom_sf"/>
</dbReference>
<dbReference type="InterPro" id="IPR001849">
    <property type="entry name" value="PH_domain"/>
</dbReference>
<dbReference type="InterPro" id="IPR001660">
    <property type="entry name" value="SAM"/>
</dbReference>
<dbReference type="InterPro" id="IPR013761">
    <property type="entry name" value="SAM/pointed_sf"/>
</dbReference>
<dbReference type="PANTHER" id="PTHR11255">
    <property type="entry name" value="DIACYLGLYCEROL KINASE"/>
    <property type="match status" value="1"/>
</dbReference>
<dbReference type="PANTHER" id="PTHR11255:SF109">
    <property type="entry name" value="DIACYLGLYCEROL KINASE ETA"/>
    <property type="match status" value="1"/>
</dbReference>
<dbReference type="Pfam" id="PF00130">
    <property type="entry name" value="C1_1"/>
    <property type="match status" value="2"/>
</dbReference>
<dbReference type="Pfam" id="PF00609">
    <property type="entry name" value="DAGK_acc"/>
    <property type="match status" value="1"/>
</dbReference>
<dbReference type="Pfam" id="PF00781">
    <property type="entry name" value="DAGK_cat"/>
    <property type="match status" value="1"/>
</dbReference>
<dbReference type="Pfam" id="PF22944">
    <property type="entry name" value="DGKD_4H"/>
    <property type="match status" value="1"/>
</dbReference>
<dbReference type="Pfam" id="PF00169">
    <property type="entry name" value="PH"/>
    <property type="match status" value="1"/>
</dbReference>
<dbReference type="Pfam" id="PF00536">
    <property type="entry name" value="SAM_1"/>
    <property type="match status" value="1"/>
</dbReference>
<dbReference type="SMART" id="SM00109">
    <property type="entry name" value="C1"/>
    <property type="match status" value="2"/>
</dbReference>
<dbReference type="SMART" id="SM00045">
    <property type="entry name" value="DAGKa"/>
    <property type="match status" value="1"/>
</dbReference>
<dbReference type="SMART" id="SM00046">
    <property type="entry name" value="DAGKc"/>
    <property type="match status" value="1"/>
</dbReference>
<dbReference type="SMART" id="SM00233">
    <property type="entry name" value="PH"/>
    <property type="match status" value="1"/>
</dbReference>
<dbReference type="SMART" id="SM00454">
    <property type="entry name" value="SAM"/>
    <property type="match status" value="1"/>
</dbReference>
<dbReference type="SUPFAM" id="SSF57889">
    <property type="entry name" value="Cysteine-rich domain"/>
    <property type="match status" value="2"/>
</dbReference>
<dbReference type="SUPFAM" id="SSF111331">
    <property type="entry name" value="NAD kinase/diacylglycerol kinase-like"/>
    <property type="match status" value="2"/>
</dbReference>
<dbReference type="SUPFAM" id="SSF50729">
    <property type="entry name" value="PH domain-like"/>
    <property type="match status" value="1"/>
</dbReference>
<dbReference type="SUPFAM" id="SSF47769">
    <property type="entry name" value="SAM/Pointed domain"/>
    <property type="match status" value="1"/>
</dbReference>
<dbReference type="PROSITE" id="PS50146">
    <property type="entry name" value="DAGK"/>
    <property type="match status" value="1"/>
</dbReference>
<dbReference type="PROSITE" id="PS50003">
    <property type="entry name" value="PH_DOMAIN"/>
    <property type="match status" value="1"/>
</dbReference>
<dbReference type="PROSITE" id="PS50105">
    <property type="entry name" value="SAM_DOMAIN"/>
    <property type="match status" value="1"/>
</dbReference>
<dbReference type="PROSITE" id="PS00479">
    <property type="entry name" value="ZF_DAG_PE_1"/>
    <property type="match status" value="2"/>
</dbReference>
<dbReference type="PROSITE" id="PS50081">
    <property type="entry name" value="ZF_DAG_PE_2"/>
    <property type="match status" value="2"/>
</dbReference>
<name>DGKH_DROAN</name>
<proteinExistence type="inferred from homology"/>
<organism>
    <name type="scientific">Drosophila ananassae</name>
    <name type="common">Fruit fly</name>
    <dbReference type="NCBI Taxonomy" id="7217"/>
    <lineage>
        <taxon>Eukaryota</taxon>
        <taxon>Metazoa</taxon>
        <taxon>Ecdysozoa</taxon>
        <taxon>Arthropoda</taxon>
        <taxon>Hexapoda</taxon>
        <taxon>Insecta</taxon>
        <taxon>Pterygota</taxon>
        <taxon>Neoptera</taxon>
        <taxon>Endopterygota</taxon>
        <taxon>Diptera</taxon>
        <taxon>Brachycera</taxon>
        <taxon>Muscomorpha</taxon>
        <taxon>Ephydroidea</taxon>
        <taxon>Drosophilidae</taxon>
        <taxon>Drosophila</taxon>
        <taxon>Sophophora</taxon>
    </lineage>
</organism>
<protein>
    <recommendedName>
        <fullName evidence="1">Diacylglycerol kinase eta</fullName>
        <shortName evidence="1">DAG kinase eta</shortName>
        <ecNumber>2.7.1.107</ecNumber>
    </recommendedName>
</protein>
<evidence type="ECO:0000250" key="1">
    <source>
        <dbReference type="UniProtKB" id="Q86XP1"/>
    </source>
</evidence>
<evidence type="ECO:0000255" key="2"/>
<evidence type="ECO:0000255" key="3">
    <source>
        <dbReference type="PROSITE-ProRule" id="PRU00145"/>
    </source>
</evidence>
<evidence type="ECO:0000255" key="4">
    <source>
        <dbReference type="PROSITE-ProRule" id="PRU00184"/>
    </source>
</evidence>
<evidence type="ECO:0000255" key="5">
    <source>
        <dbReference type="PROSITE-ProRule" id="PRU00226"/>
    </source>
</evidence>
<evidence type="ECO:0000255" key="6">
    <source>
        <dbReference type="PROSITE-ProRule" id="PRU00783"/>
    </source>
</evidence>
<evidence type="ECO:0000256" key="7">
    <source>
        <dbReference type="SAM" id="MobiDB-lite"/>
    </source>
</evidence>
<evidence type="ECO:0000305" key="8"/>
<evidence type="ECO:0000312" key="9">
    <source>
        <dbReference type="EMBL" id="EDV42796.1"/>
    </source>
</evidence>
<gene>
    <name type="ORF">GF18176</name>
</gene>
<feature type="chain" id="PRO_0000375984" description="Diacylglycerol kinase eta">
    <location>
        <begin position="1"/>
        <end position="1916"/>
    </location>
</feature>
<feature type="domain" description="PH" evidence="3">
    <location>
        <begin position="82"/>
        <end position="175"/>
    </location>
</feature>
<feature type="domain" description="DAGKc" evidence="6">
    <location>
        <begin position="350"/>
        <end position="486"/>
    </location>
</feature>
<feature type="domain" description="SAM" evidence="4">
    <location>
        <begin position="1853"/>
        <end position="1916"/>
    </location>
</feature>
<feature type="zinc finger region" description="Phorbol-ester/DAG-type 1" evidence="5">
    <location>
        <begin position="195"/>
        <end position="245"/>
    </location>
</feature>
<feature type="zinc finger region" description="Phorbol-ester/DAG-type 2" evidence="5">
    <location>
        <begin position="268"/>
        <end position="319"/>
    </location>
</feature>
<feature type="region of interest" description="Disordered" evidence="7">
    <location>
        <begin position="1"/>
        <end position="36"/>
    </location>
</feature>
<feature type="region of interest" description="Disordered" evidence="7">
    <location>
        <begin position="623"/>
        <end position="648"/>
    </location>
</feature>
<feature type="region of interest" description="Disordered" evidence="7">
    <location>
        <begin position="846"/>
        <end position="874"/>
    </location>
</feature>
<feature type="region of interest" description="Disordered" evidence="7">
    <location>
        <begin position="1018"/>
        <end position="1067"/>
    </location>
</feature>
<feature type="region of interest" description="Disordered" evidence="7">
    <location>
        <begin position="1183"/>
        <end position="1214"/>
    </location>
</feature>
<feature type="compositionally biased region" description="Low complexity" evidence="7">
    <location>
        <begin position="19"/>
        <end position="36"/>
    </location>
</feature>
<feature type="compositionally biased region" description="Basic and acidic residues" evidence="7">
    <location>
        <begin position="623"/>
        <end position="644"/>
    </location>
</feature>
<comment type="function">
    <text evidence="1">Phosphorylates diacylglycerol (DAG) to generate phosphatidic acid (PA).</text>
</comment>
<comment type="catalytic activity">
    <reaction>
        <text>a 1,2-diacyl-sn-glycerol + ATP = a 1,2-diacyl-sn-glycero-3-phosphate + ADP + H(+)</text>
        <dbReference type="Rhea" id="RHEA:10272"/>
        <dbReference type="ChEBI" id="CHEBI:15378"/>
        <dbReference type="ChEBI" id="CHEBI:17815"/>
        <dbReference type="ChEBI" id="CHEBI:30616"/>
        <dbReference type="ChEBI" id="CHEBI:58608"/>
        <dbReference type="ChEBI" id="CHEBI:456216"/>
        <dbReference type="EC" id="2.7.1.107"/>
    </reaction>
</comment>
<comment type="subcellular location">
    <subcellularLocation>
        <location evidence="1">Cytoplasm</location>
    </subcellularLocation>
</comment>
<comment type="similarity">
    <text evidence="2">Belongs to the eukaryotic diacylglycerol kinase family.</text>
</comment>
<comment type="sequence caution" evidence="8">
    <conflict type="erroneous gene model prediction">
        <sequence resource="EMBL-CDS" id="EDV42796"/>
    </conflict>
</comment>
<sequence>MAHIKLDTLDVVQRPGTTRRSNSNSGRSSACSSGSLSPVPIIPIIAISRDTDDSESESEIETEPARLFQRRMSIKCTNNLAAIIKEGFLLKHTWSFQRWRRRYFRLKRNVLFHAKDFQCDVLDEIDLSDLCYFECGIKNVNHSSQIITPTRSLVLCAESRREMEDWLGSLKTATTPQRPRGDSFLIEQHDILSNHHHWYATSHARPTYCNVCRDALSGVTSHGLSCEVCKCKVHKRCAAKSIANCKWTTLASVGKDIIEQADGSIIMPHQWMEGNLPVSSVCAVCKKTCGSVLRLQDWRCLWCRATVHVACRPQMAVACPIGPAKLSVVPPTSVHSISTDDAWDVASPKGNFSPLLVFVNSKSGDNQGVKFLRRFKQLLNPAQVFDLISTGPSLGLRLFRHFEMFRILVCSGDGSVGWVLSEIDRFNMHKQCQVAVMPLGTGNDLARVLGWGSSCDDDTHLPQILERYESASTKMLDRWSIMVFEKAIAVPKTPKMSITTEQEALLTGMVTSANHHLRFIVETNDTQTLISSTQSLCDTIDDLVGRISEHHREDEQLAVKCDILRQKLNMLLDALQEEEMGAHSGDDLIATIRSLIARSIPQTPGTSAPLLNPSISIEKNEKDEINTKERRSSRSLRSSEKEALQSRANSVKRAIYNVVEHSEPGRPKRYQRKLSITPFEALKLPTTASGDSTPCSSPLPIIPPINIISPTMETSRLTCISPLPDTRRDSVDESFFNSISLPAPRQFADSRRSSGVPDVIQEIEEGANGETVYRIGRMSLSGGANIDDAGNRLSPCSDGGENTPTERKVDFLRVPILTGEPIVDPLSDYRPIEVFERTYYMNRELDRGKEGTEEKKGDIEKEKSSGTDVEKEDNMPTEKQALVHICNLQVPGIVVTPNSQNVYTSASLTIIDTDAQTTNEQSSSEEIAGEASDVLSAISNEECSVASEIFDKQDAGHTLGDIIQSLDASNFTHIDSPETSDETEAMPGESIMDDISSVLGHDITYALQDNTLTDDTTTLCSEHVGPPKPPRKKSLSALTRGHSHPRRRNSSPPRIPRLARMDSDDNPQQFGFENIVFEIDNRCDDQKMREPPRYCSLAQFVEGNDIARQSFKQLMLEQHGSNDNDTEYPEQQTPTNTMTNLMATTSEDELSTQTAIKIEIQDVDATMVRNINSSMKANTILTTSTSPTKKSGHGQDISVVVRPPTPLRGDSVKPSGSLLLDGSGGAISMAMGCSSLLGVRAMNAEIRRHSSHAPGLAVREIDKDKDRRHSGFNPNLLTLDPEHARFLSSSPAASRRISCGSLFKKNQKIATKRGYGLFSVRFLVVAEPDIRLATLALIRPLIPLPNEALPNLQTLKGSKSSLFMGSTLFGFDQFAAGDKEKDEKGCKDKEKTPTEETGRKLPIINPLVRLPNWPNLANGGGFISKCLLANADTLCAAVSPLMDPDETLLAGYHEKCVMNNYFGIGIDAKISLDFHNKREEHPEKCRSRARNYMWYGVLGSKQLLQKTCKNLEQRVQLECDGQRIPLPELQGIVILNIPSFMGGTNFWGSSTKKDDIFLPPSFDDRVLEVVAVFGSVQMAASRLINLQHHRIAQCQSVQINILGDEEIPIQVDGEAWLQPPGMIRILHKNRVQMLCRNRSLELSLKSWQEKQRQHSISIQRDTSSTTSEHATSTDEVISERECYVLLNFIEAVSSLVKWVKFLIISHPALQHDLYAVACRASEALESIHPQGKLLEGPSLRTKLVEVIDSSRQLYDDACTLLRDRGHSLILREDLETKLSAALANMEMELKKCSVQKCIDGKLRAYFNVLAPNEEPDARRKSRPFWVRLRSGSTAGQQAFKPPLTNTREAANNWSVNEVVTWLETMQLSEYVDSFLKNDIRGKELITLGRRDLKDLGVVKVGHVKRILQAIKDLSEN</sequence>
<keyword id="KW-0067">ATP-binding</keyword>
<keyword id="KW-0963">Cytoplasm</keyword>
<keyword id="KW-0418">Kinase</keyword>
<keyword id="KW-0479">Metal-binding</keyword>
<keyword id="KW-0547">Nucleotide-binding</keyword>
<keyword id="KW-0597">Phosphoprotein</keyword>
<keyword id="KW-1185">Reference proteome</keyword>
<keyword id="KW-0677">Repeat</keyword>
<keyword id="KW-0808">Transferase</keyword>
<keyword id="KW-0862">Zinc</keyword>
<keyword id="KW-0863">Zinc-finger</keyword>
<reference evidence="9" key="1">
    <citation type="journal article" date="2007" name="Nature">
        <title>Evolution of genes and genomes on the Drosophila phylogeny.</title>
        <authorList>
            <consortium name="Drosophila 12 genomes consortium"/>
        </authorList>
    </citation>
    <scope>NUCLEOTIDE SEQUENCE [LARGE SCALE GENOMIC DNA]</scope>
    <source>
        <strain evidence="9">Tucson 14024-0371.13</strain>
    </source>
</reference>